<comment type="function">
    <text evidence="1">Glucanases play a role in cell expansion during growth, in cell-cell fusion during mating, and in spore release during sporulation. This enzyme may be involved in beta-glucan degradation and also function biosynthetically as a transglycosylase (By similarity).</text>
</comment>
<comment type="catalytic activity">
    <reaction>
        <text>Hydrolysis of (1-&gt;3)-beta-D-glucosidic linkages in (1-&gt;3)-beta-D-glucans.</text>
        <dbReference type="EC" id="3.2.1.39"/>
    </reaction>
</comment>
<comment type="subcellular location">
    <subcellularLocation>
        <location evidence="1">Cell membrane</location>
        <topology evidence="1">Lipid-anchor</topology>
        <topology evidence="1">GPI-anchor</topology>
    </subcellularLocation>
    <subcellularLocation>
        <location evidence="1">Secreted</location>
        <location evidence="1">Cell wall</location>
    </subcellularLocation>
    <text evidence="1">Covalently-linked GPI-modified cell wall protein.</text>
</comment>
<comment type="PTM">
    <text evidence="1">The GPI-anchor is attached to the protein in the endoplasmic reticulum and serves to target the protein to the cell surface. There, the glucosamine-inositol phospholipid moiety is cleaved off and the GPI-modified mannoprotein is covalently attached via its lipidless GPI glycan remnant to the 1,6-beta-glucan of the outer cell wall layer (By similarity).</text>
</comment>
<comment type="similarity">
    <text evidence="5">Belongs to the glycosyl hydrolase 17 family.</text>
</comment>
<name>EGLC_ASPCL</name>
<accession>A1CD22</accession>
<dbReference type="EC" id="3.2.1.39"/>
<dbReference type="EMBL" id="DS027050">
    <property type="protein sequence ID" value="EAW12429.1"/>
    <property type="molecule type" value="Genomic_DNA"/>
</dbReference>
<dbReference type="RefSeq" id="XP_001273855.1">
    <property type="nucleotide sequence ID" value="XM_001273854.1"/>
</dbReference>
<dbReference type="SMR" id="A1CD22"/>
<dbReference type="STRING" id="344612.A1CD22"/>
<dbReference type="GlyCosmos" id="A1CD22">
    <property type="glycosylation" value="4 sites, No reported glycans"/>
</dbReference>
<dbReference type="EnsemblFungi" id="EAW12429">
    <property type="protein sequence ID" value="EAW12429"/>
    <property type="gene ID" value="ACLA_064000"/>
</dbReference>
<dbReference type="GeneID" id="4705814"/>
<dbReference type="KEGG" id="act:ACLA_064000"/>
<dbReference type="VEuPathDB" id="FungiDB:ACLA_064000"/>
<dbReference type="eggNOG" id="ENOG502SI3D">
    <property type="taxonomic scope" value="Eukaryota"/>
</dbReference>
<dbReference type="HOGENOM" id="CLU_028820_1_1_1"/>
<dbReference type="OMA" id="WDDVGCP"/>
<dbReference type="OrthoDB" id="77201at2759"/>
<dbReference type="Proteomes" id="UP000006701">
    <property type="component" value="Unassembled WGS sequence"/>
</dbReference>
<dbReference type="GO" id="GO:0009986">
    <property type="term" value="C:cell surface"/>
    <property type="evidence" value="ECO:0007669"/>
    <property type="project" value="TreeGrafter"/>
</dbReference>
<dbReference type="GO" id="GO:0005576">
    <property type="term" value="C:extracellular region"/>
    <property type="evidence" value="ECO:0007669"/>
    <property type="project" value="UniProtKB-KW"/>
</dbReference>
<dbReference type="GO" id="GO:0009277">
    <property type="term" value="C:fungal-type cell wall"/>
    <property type="evidence" value="ECO:0007669"/>
    <property type="project" value="TreeGrafter"/>
</dbReference>
<dbReference type="GO" id="GO:0005886">
    <property type="term" value="C:plasma membrane"/>
    <property type="evidence" value="ECO:0007669"/>
    <property type="project" value="UniProtKB-SubCell"/>
</dbReference>
<dbReference type="GO" id="GO:0098552">
    <property type="term" value="C:side of membrane"/>
    <property type="evidence" value="ECO:0007669"/>
    <property type="project" value="UniProtKB-KW"/>
</dbReference>
<dbReference type="GO" id="GO:0042973">
    <property type="term" value="F:glucan endo-1,3-beta-D-glucosidase activity"/>
    <property type="evidence" value="ECO:0007669"/>
    <property type="project" value="UniProtKB-EC"/>
</dbReference>
<dbReference type="GO" id="GO:0071555">
    <property type="term" value="P:cell wall organization"/>
    <property type="evidence" value="ECO:0007669"/>
    <property type="project" value="UniProtKB-KW"/>
</dbReference>
<dbReference type="GO" id="GO:0000272">
    <property type="term" value="P:polysaccharide catabolic process"/>
    <property type="evidence" value="ECO:0007669"/>
    <property type="project" value="UniProtKB-KW"/>
</dbReference>
<dbReference type="FunFam" id="3.20.20.80:FF:000233">
    <property type="entry name" value="Probable glucan endo-1,3-beta-glucosidase eglC"/>
    <property type="match status" value="1"/>
</dbReference>
<dbReference type="Gene3D" id="3.20.20.80">
    <property type="entry name" value="Glycosidases"/>
    <property type="match status" value="1"/>
</dbReference>
<dbReference type="InterPro" id="IPR050732">
    <property type="entry name" value="Beta-glucan_modifiers"/>
</dbReference>
<dbReference type="InterPro" id="IPR000490">
    <property type="entry name" value="Glyco_hydro_17"/>
</dbReference>
<dbReference type="InterPro" id="IPR017853">
    <property type="entry name" value="Glycoside_hydrolase_SF"/>
</dbReference>
<dbReference type="PANTHER" id="PTHR16631">
    <property type="entry name" value="GLUCAN 1,3-BETA-GLUCOSIDASE"/>
    <property type="match status" value="1"/>
</dbReference>
<dbReference type="PANTHER" id="PTHR16631:SF13">
    <property type="entry name" value="GLUCAN ENDO-1,3-BETA-GLUCOSIDASE EGLC-RELATED"/>
    <property type="match status" value="1"/>
</dbReference>
<dbReference type="Pfam" id="PF00332">
    <property type="entry name" value="Glyco_hydro_17"/>
    <property type="match status" value="1"/>
</dbReference>
<dbReference type="SUPFAM" id="SSF51445">
    <property type="entry name" value="(Trans)glycosidases"/>
    <property type="match status" value="1"/>
</dbReference>
<keyword id="KW-0119">Carbohydrate metabolism</keyword>
<keyword id="KW-1003">Cell membrane</keyword>
<keyword id="KW-0134">Cell wall</keyword>
<keyword id="KW-0961">Cell wall biogenesis/degradation</keyword>
<keyword id="KW-0325">Glycoprotein</keyword>
<keyword id="KW-0336">GPI-anchor</keyword>
<keyword id="KW-0378">Hydrolase</keyword>
<keyword id="KW-0449">Lipoprotein</keyword>
<keyword id="KW-0472">Membrane</keyword>
<keyword id="KW-0624">Polysaccharide degradation</keyword>
<keyword id="KW-1185">Reference proteome</keyword>
<keyword id="KW-0964">Secreted</keyword>
<keyword id="KW-0732">Signal</keyword>
<gene>
    <name type="primary">eglC</name>
    <name type="ORF">ACLA_064000</name>
</gene>
<sequence>MQTRQLLALALAVAATEAAHQGFNYGNTKSDGSAKSQSDFAAEFSTAKNLVGTSGFTSARLYTMIQGGTSATPISAIPAAIAEDTSLLLGIWASGGNVANEIAALKAAIAQYGADFGKHVVGISVGSEDLYRNSVDGVKSKAGLGANPDDLVSYIHQVREAIAGTSLSGAPIGHVDTWTAWVNGSNSAVIDACDWLGFDGYPYFQNTMPNSISDAKALFDESVAKTQAVAKGKEVWITETGWPVSGKTENLAVANTANAKAYWDQVGCPLFGNTNTWWYILQDADPVTPNPSFGIVGSTLSTTPLFDLSCSAVSSSSAVPSATAAATAASGAGASGSQTSGFATAAAGSSSAAKPTFSVGKGPNGSYNGTYPGSWNSTRPGANGGSSGSSGSSGSSGSSGSSGSSGSGASGHSSSTGSSSFPSSTNLLSNSASGLSGSLFGAVAAVFVALAAL</sequence>
<evidence type="ECO:0000250" key="1"/>
<evidence type="ECO:0000250" key="2">
    <source>
        <dbReference type="UniProtKB" id="O22317"/>
    </source>
</evidence>
<evidence type="ECO:0000255" key="3"/>
<evidence type="ECO:0000256" key="4">
    <source>
        <dbReference type="SAM" id="MobiDB-lite"/>
    </source>
</evidence>
<evidence type="ECO:0000305" key="5"/>
<reference key="1">
    <citation type="journal article" date="2008" name="PLoS Genet.">
        <title>Genomic islands in the pathogenic filamentous fungus Aspergillus fumigatus.</title>
        <authorList>
            <person name="Fedorova N.D."/>
            <person name="Khaldi N."/>
            <person name="Joardar V.S."/>
            <person name="Maiti R."/>
            <person name="Amedeo P."/>
            <person name="Anderson M.J."/>
            <person name="Crabtree J."/>
            <person name="Silva J.C."/>
            <person name="Badger J.H."/>
            <person name="Albarraq A."/>
            <person name="Angiuoli S."/>
            <person name="Bussey H."/>
            <person name="Bowyer P."/>
            <person name="Cotty P.J."/>
            <person name="Dyer P.S."/>
            <person name="Egan A."/>
            <person name="Galens K."/>
            <person name="Fraser-Liggett C.M."/>
            <person name="Haas B.J."/>
            <person name="Inman J.M."/>
            <person name="Kent R."/>
            <person name="Lemieux S."/>
            <person name="Malavazi I."/>
            <person name="Orvis J."/>
            <person name="Roemer T."/>
            <person name="Ronning C.M."/>
            <person name="Sundaram J.P."/>
            <person name="Sutton G."/>
            <person name="Turner G."/>
            <person name="Venter J.C."/>
            <person name="White O.R."/>
            <person name="Whitty B.R."/>
            <person name="Youngman P."/>
            <person name="Wolfe K.H."/>
            <person name="Goldman G.H."/>
            <person name="Wortman J.R."/>
            <person name="Jiang B."/>
            <person name="Denning D.W."/>
            <person name="Nierman W.C."/>
        </authorList>
    </citation>
    <scope>NUCLEOTIDE SEQUENCE [LARGE SCALE GENOMIC DNA]</scope>
    <source>
        <strain>ATCC 1007 / CBS 513.65 / DSM 816 / NCTC 3887 / NRRL 1 / QM 1276 / 107</strain>
    </source>
</reference>
<protein>
    <recommendedName>
        <fullName>Probable glucan endo-1,3-beta-glucosidase eglC</fullName>
        <ecNumber>3.2.1.39</ecNumber>
    </recommendedName>
    <alternativeName>
        <fullName>Endo-1,3-beta-glucanase eglC</fullName>
    </alternativeName>
    <alternativeName>
        <fullName>Laminarinase eglC</fullName>
    </alternativeName>
</protein>
<proteinExistence type="inferred from homology"/>
<feature type="signal peptide" evidence="3">
    <location>
        <begin position="1"/>
        <end position="18"/>
    </location>
</feature>
<feature type="chain" id="PRO_0000395138" description="Probable glucan endo-1,3-beta-glucosidase eglC">
    <location>
        <begin position="19"/>
        <end position="430"/>
    </location>
</feature>
<feature type="propeptide" id="PRO_0000395139" description="Removed in mature form" evidence="3">
    <location>
        <begin position="431"/>
        <end position="453"/>
    </location>
</feature>
<feature type="region of interest" description="Disordered" evidence="4">
    <location>
        <begin position="370"/>
        <end position="423"/>
    </location>
</feature>
<feature type="compositionally biased region" description="Polar residues" evidence="4">
    <location>
        <begin position="370"/>
        <end position="380"/>
    </location>
</feature>
<feature type="compositionally biased region" description="Low complexity" evidence="4">
    <location>
        <begin position="389"/>
        <end position="402"/>
    </location>
</feature>
<feature type="compositionally biased region" description="Low complexity" evidence="4">
    <location>
        <begin position="410"/>
        <end position="423"/>
    </location>
</feature>
<feature type="active site" description="Proton donor" evidence="2">
    <location>
        <position position="128"/>
    </location>
</feature>
<feature type="active site" description="Nucleophile" evidence="2">
    <location>
        <position position="239"/>
    </location>
</feature>
<feature type="lipid moiety-binding region" description="GPI-anchor amidated asparagine" evidence="3">
    <location>
        <position position="430"/>
    </location>
</feature>
<feature type="glycosylation site" description="N-linked (GlcNAc...) asparagine" evidence="3">
    <location>
        <position position="183"/>
    </location>
</feature>
<feature type="glycosylation site" description="N-linked (GlcNAc...) asparagine" evidence="3">
    <location>
        <position position="364"/>
    </location>
</feature>
<feature type="glycosylation site" description="N-linked (GlcNAc...) asparagine" evidence="3">
    <location>
        <position position="368"/>
    </location>
</feature>
<feature type="glycosylation site" description="N-linked (GlcNAc...) asparagine" evidence="3">
    <location>
        <position position="376"/>
    </location>
</feature>
<organism>
    <name type="scientific">Aspergillus clavatus (strain ATCC 1007 / CBS 513.65 / DSM 816 / NCTC 3887 / NRRL 1 / QM 1276 / 107)</name>
    <dbReference type="NCBI Taxonomy" id="344612"/>
    <lineage>
        <taxon>Eukaryota</taxon>
        <taxon>Fungi</taxon>
        <taxon>Dikarya</taxon>
        <taxon>Ascomycota</taxon>
        <taxon>Pezizomycotina</taxon>
        <taxon>Eurotiomycetes</taxon>
        <taxon>Eurotiomycetidae</taxon>
        <taxon>Eurotiales</taxon>
        <taxon>Aspergillaceae</taxon>
        <taxon>Aspergillus</taxon>
        <taxon>Aspergillus subgen. Fumigati</taxon>
    </lineage>
</organism>